<dbReference type="EMBL" id="CP001101">
    <property type="protein sequence ID" value="ACE04442.1"/>
    <property type="molecule type" value="Genomic_DNA"/>
</dbReference>
<dbReference type="SMR" id="B3EJS3"/>
<dbReference type="STRING" id="331678.Cphamn1_1516"/>
<dbReference type="KEGG" id="cpb:Cphamn1_1516"/>
<dbReference type="eggNOG" id="COG1492">
    <property type="taxonomic scope" value="Bacteria"/>
</dbReference>
<dbReference type="HOGENOM" id="CLU_019250_2_2_10"/>
<dbReference type="OrthoDB" id="9808302at2"/>
<dbReference type="UniPathway" id="UPA00148"/>
<dbReference type="GO" id="GO:0015420">
    <property type="term" value="F:ABC-type vitamin B12 transporter activity"/>
    <property type="evidence" value="ECO:0007669"/>
    <property type="project" value="UniProtKB-UniRule"/>
</dbReference>
<dbReference type="GO" id="GO:0003824">
    <property type="term" value="F:catalytic activity"/>
    <property type="evidence" value="ECO:0007669"/>
    <property type="project" value="InterPro"/>
</dbReference>
<dbReference type="GO" id="GO:0009236">
    <property type="term" value="P:cobalamin biosynthetic process"/>
    <property type="evidence" value="ECO:0007669"/>
    <property type="project" value="UniProtKB-UniRule"/>
</dbReference>
<dbReference type="CDD" id="cd05389">
    <property type="entry name" value="CobQ_N"/>
    <property type="match status" value="1"/>
</dbReference>
<dbReference type="CDD" id="cd01750">
    <property type="entry name" value="GATase1_CobQ"/>
    <property type="match status" value="1"/>
</dbReference>
<dbReference type="Gene3D" id="3.40.50.880">
    <property type="match status" value="1"/>
</dbReference>
<dbReference type="Gene3D" id="3.40.50.300">
    <property type="entry name" value="P-loop containing nucleotide triphosphate hydrolases"/>
    <property type="match status" value="1"/>
</dbReference>
<dbReference type="HAMAP" id="MF_00028">
    <property type="entry name" value="CobQ"/>
    <property type="match status" value="1"/>
</dbReference>
<dbReference type="InterPro" id="IPR029062">
    <property type="entry name" value="Class_I_gatase-like"/>
</dbReference>
<dbReference type="InterPro" id="IPR002586">
    <property type="entry name" value="CobQ/CobB/MinD/ParA_Nub-bd_dom"/>
</dbReference>
<dbReference type="InterPro" id="IPR033949">
    <property type="entry name" value="CobQ_GATase1"/>
</dbReference>
<dbReference type="InterPro" id="IPR047045">
    <property type="entry name" value="CobQ_N"/>
</dbReference>
<dbReference type="InterPro" id="IPR004459">
    <property type="entry name" value="CobQ_synth"/>
</dbReference>
<dbReference type="InterPro" id="IPR011698">
    <property type="entry name" value="GATase_3"/>
</dbReference>
<dbReference type="InterPro" id="IPR027417">
    <property type="entry name" value="P-loop_NTPase"/>
</dbReference>
<dbReference type="NCBIfam" id="TIGR00313">
    <property type="entry name" value="cobQ"/>
    <property type="match status" value="1"/>
</dbReference>
<dbReference type="NCBIfam" id="NF001989">
    <property type="entry name" value="PRK00784.1"/>
    <property type="match status" value="1"/>
</dbReference>
<dbReference type="PANTHER" id="PTHR21343:SF1">
    <property type="entry name" value="COBYRIC ACID SYNTHASE"/>
    <property type="match status" value="1"/>
</dbReference>
<dbReference type="PANTHER" id="PTHR21343">
    <property type="entry name" value="DETHIOBIOTIN SYNTHETASE"/>
    <property type="match status" value="1"/>
</dbReference>
<dbReference type="Pfam" id="PF01656">
    <property type="entry name" value="CbiA"/>
    <property type="match status" value="1"/>
</dbReference>
<dbReference type="Pfam" id="PF07685">
    <property type="entry name" value="GATase_3"/>
    <property type="match status" value="1"/>
</dbReference>
<dbReference type="SUPFAM" id="SSF52317">
    <property type="entry name" value="Class I glutamine amidotransferase-like"/>
    <property type="match status" value="1"/>
</dbReference>
<dbReference type="SUPFAM" id="SSF52540">
    <property type="entry name" value="P-loop containing nucleoside triphosphate hydrolases"/>
    <property type="match status" value="1"/>
</dbReference>
<dbReference type="PROSITE" id="PS51274">
    <property type="entry name" value="GATASE_COBBQ"/>
    <property type="match status" value="1"/>
</dbReference>
<evidence type="ECO:0000255" key="1">
    <source>
        <dbReference type="HAMAP-Rule" id="MF_00028"/>
    </source>
</evidence>
<name>COBQ_CHLPB</name>
<feature type="chain" id="PRO_1000090222" description="Cobyric acid synthase">
    <location>
        <begin position="1"/>
        <end position="495"/>
    </location>
</feature>
<feature type="domain" description="GATase cobBQ-type" evidence="1">
    <location>
        <begin position="253"/>
        <end position="446"/>
    </location>
</feature>
<feature type="active site" description="Nucleophile" evidence="1">
    <location>
        <position position="334"/>
    </location>
</feature>
<feature type="active site" evidence="1">
    <location>
        <position position="438"/>
    </location>
</feature>
<keyword id="KW-0169">Cobalamin biosynthesis</keyword>
<keyword id="KW-0315">Glutamine amidotransferase</keyword>
<gene>
    <name evidence="1" type="primary">cobQ</name>
    <name type="ordered locus">Cphamn1_1516</name>
</gene>
<comment type="function">
    <text evidence="1">Catalyzes amidations at positions B, D, E, and G on adenosylcobyrinic A,C-diamide. NH(2) groups are provided by glutamine, and one molecule of ATP is hydrogenolyzed for each amidation.</text>
</comment>
<comment type="pathway">
    <text evidence="1">Cofactor biosynthesis; adenosylcobalamin biosynthesis.</text>
</comment>
<comment type="similarity">
    <text evidence="1">Belongs to the CobB/CobQ family. CobQ subfamily.</text>
</comment>
<accession>B3EJS3</accession>
<sequence>MRNLAVFGTASDVGKSVVATALCRIFSNAGLDVAPFKAQNMSNNSGVTPDGLEMGRAQIVQAEAARVVPTADMNPVLLKPNTDTGAQVVLQGKAVANRSARDYFGNTEVWAEAAFESLERLTGRHDLVVIEGAGSCAEMNLYDRDFVNFRTAKEADAPVILVADIDRGGVFAQVAGTLSVIPPEDRARVKGVIINRFRGDSVLFDDGIRILEELSGVPVLGVIPYFRGIHIEAEDAVPLQAVVDPAASPDPGKISIAIVYFPHISNFTDFAVFDLLDDAEVHYLHHPKDLADYDAVILPGSKNVRGDLDWMIFMGWKERLAEYRKRGGIIAGICGGYQMLGISVADPHGLEGEPGETSGLGLLPVHTLLKKEKQLFNAKGCLFDDTIPVEGYEIHMGETRLTGKASPLLQLTARNNRHSSDTDGVISHDEKVFGTYFHGIFDGSAFRGWFLGKLRPDSAVNDTITEKDTEYNRLAEHFLSHLNMGKVYEIIGRGK</sequence>
<protein>
    <recommendedName>
        <fullName evidence="1">Cobyric acid synthase</fullName>
    </recommendedName>
</protein>
<reference key="1">
    <citation type="submission" date="2008-06" db="EMBL/GenBank/DDBJ databases">
        <title>Complete sequence of Chlorobium phaeobacteroides BS1.</title>
        <authorList>
            <consortium name="US DOE Joint Genome Institute"/>
            <person name="Lucas S."/>
            <person name="Copeland A."/>
            <person name="Lapidus A."/>
            <person name="Glavina del Rio T."/>
            <person name="Dalin E."/>
            <person name="Tice H."/>
            <person name="Bruce D."/>
            <person name="Goodwin L."/>
            <person name="Pitluck S."/>
            <person name="Schmutz J."/>
            <person name="Larimer F."/>
            <person name="Land M."/>
            <person name="Hauser L."/>
            <person name="Kyrpides N."/>
            <person name="Ovchinnikova G."/>
            <person name="Li T."/>
            <person name="Liu Z."/>
            <person name="Zhao F."/>
            <person name="Overmann J."/>
            <person name="Bryant D.A."/>
            <person name="Richardson P."/>
        </authorList>
    </citation>
    <scope>NUCLEOTIDE SEQUENCE [LARGE SCALE GENOMIC DNA]</scope>
    <source>
        <strain>BS1</strain>
    </source>
</reference>
<proteinExistence type="inferred from homology"/>
<organism>
    <name type="scientific">Chlorobium phaeobacteroides (strain BS1)</name>
    <dbReference type="NCBI Taxonomy" id="331678"/>
    <lineage>
        <taxon>Bacteria</taxon>
        <taxon>Pseudomonadati</taxon>
        <taxon>Chlorobiota</taxon>
        <taxon>Chlorobiia</taxon>
        <taxon>Chlorobiales</taxon>
        <taxon>Chlorobiaceae</taxon>
        <taxon>Chlorobium/Pelodictyon group</taxon>
        <taxon>Chlorobium</taxon>
    </lineage>
</organism>